<accession>Q11YP2</accession>
<proteinExistence type="inferred from homology"/>
<keyword id="KW-0066">ATP synthesis</keyword>
<keyword id="KW-0997">Cell inner membrane</keyword>
<keyword id="KW-1003">Cell membrane</keyword>
<keyword id="KW-0139">CF(1)</keyword>
<keyword id="KW-0375">Hydrogen ion transport</keyword>
<keyword id="KW-0406">Ion transport</keyword>
<keyword id="KW-0472">Membrane</keyword>
<keyword id="KW-1185">Reference proteome</keyword>
<keyword id="KW-0813">Transport</keyword>
<reference key="1">
    <citation type="journal article" date="2007" name="Appl. Environ. Microbiol.">
        <title>Genome sequence of the cellulolytic gliding bacterium Cytophaga hutchinsonii.</title>
        <authorList>
            <person name="Xie G."/>
            <person name="Bruce D.C."/>
            <person name="Challacombe J.F."/>
            <person name="Chertkov O."/>
            <person name="Detter J.C."/>
            <person name="Gilna P."/>
            <person name="Han C.S."/>
            <person name="Lucas S."/>
            <person name="Misra M."/>
            <person name="Myers G.L."/>
            <person name="Richardson P."/>
            <person name="Tapia R."/>
            <person name="Thayer N."/>
            <person name="Thompson L.S."/>
            <person name="Brettin T.S."/>
            <person name="Henrissat B."/>
            <person name="Wilson D.B."/>
            <person name="McBride M.J."/>
        </authorList>
    </citation>
    <scope>NUCLEOTIDE SEQUENCE [LARGE SCALE GENOMIC DNA]</scope>
    <source>
        <strain>ATCC 33406 / DSM 1761 / JCM 20678 / CIP 103989 / IAM 12607 / NBRC 15051 / NCIMB 9469 / D465</strain>
    </source>
</reference>
<sequence>MKETRVAYRYAKSLIDLAAENGVLDRVNADMAGIESVFKQNHQLVAVMKNPIVQGDKKHAILEALFGGKVDNFTMSLLSLLTKKHREAVVFEISSEFQRQYREKMGIKIVEVTTTQPITEDQRANFKAIMASKASKVELIEKIDEKILGGFVLKMDDQQIDESVIAKLNKIKNKFTEQVINY</sequence>
<evidence type="ECO:0000255" key="1">
    <source>
        <dbReference type="HAMAP-Rule" id="MF_01416"/>
    </source>
</evidence>
<name>ATPD_CYTH3</name>
<feature type="chain" id="PRO_0000370958" description="ATP synthase subunit delta">
    <location>
        <begin position="1"/>
        <end position="182"/>
    </location>
</feature>
<gene>
    <name evidence="1" type="primary">atpH</name>
    <name type="ordered locus">CHU_0182</name>
</gene>
<organism>
    <name type="scientific">Cytophaga hutchinsonii (strain ATCC 33406 / DSM 1761 / CIP 103989 / NBRC 15051 / NCIMB 9469 / D465)</name>
    <dbReference type="NCBI Taxonomy" id="269798"/>
    <lineage>
        <taxon>Bacteria</taxon>
        <taxon>Pseudomonadati</taxon>
        <taxon>Bacteroidota</taxon>
        <taxon>Cytophagia</taxon>
        <taxon>Cytophagales</taxon>
        <taxon>Cytophagaceae</taxon>
        <taxon>Cytophaga</taxon>
    </lineage>
</organism>
<dbReference type="EMBL" id="CP000383">
    <property type="protein sequence ID" value="ABG57474.1"/>
    <property type="molecule type" value="Genomic_DNA"/>
</dbReference>
<dbReference type="RefSeq" id="WP_011583590.1">
    <property type="nucleotide sequence ID" value="NC_008255.1"/>
</dbReference>
<dbReference type="SMR" id="Q11YP2"/>
<dbReference type="STRING" id="269798.CHU_0182"/>
<dbReference type="KEGG" id="chu:CHU_0182"/>
<dbReference type="eggNOG" id="COG0712">
    <property type="taxonomic scope" value="Bacteria"/>
</dbReference>
<dbReference type="HOGENOM" id="CLU_085114_4_1_10"/>
<dbReference type="OrthoDB" id="9802471at2"/>
<dbReference type="Proteomes" id="UP000001822">
    <property type="component" value="Chromosome"/>
</dbReference>
<dbReference type="GO" id="GO:0005886">
    <property type="term" value="C:plasma membrane"/>
    <property type="evidence" value="ECO:0007669"/>
    <property type="project" value="UniProtKB-SubCell"/>
</dbReference>
<dbReference type="GO" id="GO:0045259">
    <property type="term" value="C:proton-transporting ATP synthase complex"/>
    <property type="evidence" value="ECO:0007669"/>
    <property type="project" value="UniProtKB-KW"/>
</dbReference>
<dbReference type="GO" id="GO:0046933">
    <property type="term" value="F:proton-transporting ATP synthase activity, rotational mechanism"/>
    <property type="evidence" value="ECO:0007669"/>
    <property type="project" value="UniProtKB-UniRule"/>
</dbReference>
<dbReference type="Gene3D" id="1.10.520.20">
    <property type="entry name" value="N-terminal domain of the delta subunit of the F1F0-ATP synthase"/>
    <property type="match status" value="1"/>
</dbReference>
<dbReference type="HAMAP" id="MF_01416">
    <property type="entry name" value="ATP_synth_delta_bact"/>
    <property type="match status" value="1"/>
</dbReference>
<dbReference type="InterPro" id="IPR026015">
    <property type="entry name" value="ATP_synth_OSCP/delta_N_sf"/>
</dbReference>
<dbReference type="InterPro" id="IPR000711">
    <property type="entry name" value="ATPase_OSCP/dsu"/>
</dbReference>
<dbReference type="NCBIfam" id="TIGR01145">
    <property type="entry name" value="ATP_synt_delta"/>
    <property type="match status" value="1"/>
</dbReference>
<dbReference type="PANTHER" id="PTHR11910">
    <property type="entry name" value="ATP SYNTHASE DELTA CHAIN"/>
    <property type="match status" value="1"/>
</dbReference>
<dbReference type="Pfam" id="PF00213">
    <property type="entry name" value="OSCP"/>
    <property type="match status" value="1"/>
</dbReference>
<dbReference type="PRINTS" id="PR00125">
    <property type="entry name" value="ATPASEDELTA"/>
</dbReference>
<dbReference type="SUPFAM" id="SSF47928">
    <property type="entry name" value="N-terminal domain of the delta subunit of the F1F0-ATP synthase"/>
    <property type="match status" value="1"/>
</dbReference>
<comment type="function">
    <text evidence="1">F(1)F(0) ATP synthase produces ATP from ADP in the presence of a proton or sodium gradient. F-type ATPases consist of two structural domains, F(1) containing the extramembraneous catalytic core and F(0) containing the membrane proton channel, linked together by a central stalk and a peripheral stalk. During catalysis, ATP synthesis in the catalytic domain of F(1) is coupled via a rotary mechanism of the central stalk subunits to proton translocation.</text>
</comment>
<comment type="function">
    <text evidence="1">This protein is part of the stalk that links CF(0) to CF(1). It either transmits conformational changes from CF(0) to CF(1) or is implicated in proton conduction.</text>
</comment>
<comment type="subunit">
    <text evidence="1">F-type ATPases have 2 components, F(1) - the catalytic core - and F(0) - the membrane proton channel. F(1) has five subunits: alpha(3), beta(3), gamma(1), delta(1), epsilon(1). F(0) has three main subunits: a(1), b(2) and c(10-14). The alpha and beta chains form an alternating ring which encloses part of the gamma chain. F(1) is attached to F(0) by a central stalk formed by the gamma and epsilon chains, while a peripheral stalk is formed by the delta and b chains.</text>
</comment>
<comment type="subcellular location">
    <subcellularLocation>
        <location evidence="1">Cell inner membrane</location>
        <topology evidence="1">Peripheral membrane protein</topology>
    </subcellularLocation>
</comment>
<comment type="similarity">
    <text evidence="1">Belongs to the ATPase delta chain family.</text>
</comment>
<protein>
    <recommendedName>
        <fullName evidence="1">ATP synthase subunit delta</fullName>
    </recommendedName>
    <alternativeName>
        <fullName evidence="1">ATP synthase F(1) sector subunit delta</fullName>
    </alternativeName>
    <alternativeName>
        <fullName evidence="1">F-type ATPase subunit delta</fullName>
        <shortName evidence="1">F-ATPase subunit delta</shortName>
    </alternativeName>
</protein>